<feature type="chain" id="PRO_0000403772" description="Protein MMS22-like">
    <location>
        <begin position="1"/>
        <end position="1238"/>
    </location>
</feature>
<feature type="splice variant" id="VSP_040445" description="In isoform 2." evidence="2">
    <location>
        <begin position="1"/>
        <end position="276"/>
    </location>
</feature>
<feature type="splice variant" id="VSP_040446" description="In isoform 2." evidence="2">
    <original>N</original>
    <variation>NS</variation>
    <location>
        <position position="793"/>
    </location>
</feature>
<reference key="1">
    <citation type="journal article" date="2003" name="PLoS Biol.">
        <title>Transcriptome analysis of mouse stem cells and early embryos.</title>
        <authorList>
            <person name="Sharov A.A."/>
            <person name="Piao Y."/>
            <person name="Matoba R."/>
            <person name="Dudekula D.B."/>
            <person name="Qian Y."/>
            <person name="VanBuren V."/>
            <person name="Falco G."/>
            <person name="Martin P.R."/>
            <person name="Stagg C.A."/>
            <person name="Bassey U.C."/>
            <person name="Wang Y."/>
            <person name="Carter M.G."/>
            <person name="Hamatani T."/>
            <person name="Aiba K."/>
            <person name="Akutsu H."/>
            <person name="Sharova L."/>
            <person name="Tanaka T.S."/>
            <person name="Kimber W.L."/>
            <person name="Yoshikawa T."/>
            <person name="Jaradat S.A."/>
            <person name="Pantano S."/>
            <person name="Nagaraja R."/>
            <person name="Boheler K.R."/>
            <person name="Taub D."/>
            <person name="Hodes R.J."/>
            <person name="Longo D.L."/>
            <person name="Schlessinger D."/>
            <person name="Keller J."/>
            <person name="Klotz E."/>
            <person name="Kelsoe G."/>
            <person name="Umezawa A."/>
            <person name="Vescovi A.L."/>
            <person name="Rossant J."/>
            <person name="Kunath T."/>
            <person name="Hogan B.L.M."/>
            <person name="Curci A."/>
            <person name="D'Urso M."/>
            <person name="Kelso J."/>
            <person name="Hide W."/>
            <person name="Ko M.S.H."/>
        </authorList>
    </citation>
    <scope>NUCLEOTIDE SEQUENCE [LARGE SCALE MRNA] (ISOFORM 2)</scope>
    <source>
        <strain>CD-1</strain>
    </source>
</reference>
<reference key="2">
    <citation type="journal article" date="2009" name="PLoS Biol.">
        <title>Lineage-specific biology revealed by a finished genome assembly of the mouse.</title>
        <authorList>
            <person name="Church D.M."/>
            <person name="Goodstadt L."/>
            <person name="Hillier L.W."/>
            <person name="Zody M.C."/>
            <person name="Goldstein S."/>
            <person name="She X."/>
            <person name="Bult C.J."/>
            <person name="Agarwala R."/>
            <person name="Cherry J.L."/>
            <person name="DiCuccio M."/>
            <person name="Hlavina W."/>
            <person name="Kapustin Y."/>
            <person name="Meric P."/>
            <person name="Maglott D."/>
            <person name="Birtle Z."/>
            <person name="Marques A.C."/>
            <person name="Graves T."/>
            <person name="Zhou S."/>
            <person name="Teague B."/>
            <person name="Potamousis K."/>
            <person name="Churas C."/>
            <person name="Place M."/>
            <person name="Herschleb J."/>
            <person name="Runnheim R."/>
            <person name="Forrest D."/>
            <person name="Amos-Landgraf J."/>
            <person name="Schwartz D.C."/>
            <person name="Cheng Z."/>
            <person name="Lindblad-Toh K."/>
            <person name="Eichler E.E."/>
            <person name="Ponting C.P."/>
        </authorList>
    </citation>
    <scope>NUCLEOTIDE SEQUENCE [LARGE SCALE GENOMIC DNA]</scope>
    <source>
        <strain>C57BL/6J</strain>
    </source>
</reference>
<reference key="3">
    <citation type="journal article" date="2004" name="Genome Res.">
        <title>The status, quality, and expansion of the NIH full-length cDNA project: the Mammalian Gene Collection (MGC).</title>
        <authorList>
            <consortium name="The MGC Project Team"/>
        </authorList>
    </citation>
    <scope>NUCLEOTIDE SEQUENCE [LARGE SCALE MRNA] OF 216-1238</scope>
    <source>
        <strain>129</strain>
        <tissue>Brain</tissue>
        <tissue>Mammary tumor</tissue>
    </source>
</reference>
<reference key="4">
    <citation type="journal article" date="2010" name="Cell">
        <title>A tissue-specific atlas of mouse protein phosphorylation and expression.</title>
        <authorList>
            <person name="Huttlin E.L."/>
            <person name="Jedrychowski M.P."/>
            <person name="Elias J.E."/>
            <person name="Goswami T."/>
            <person name="Rad R."/>
            <person name="Beausoleil S.A."/>
            <person name="Villen J."/>
            <person name="Haas W."/>
            <person name="Sowa M.E."/>
            <person name="Gygi S.P."/>
        </authorList>
    </citation>
    <scope>IDENTIFICATION BY MASS SPECTROMETRY [LARGE SCALE ANALYSIS]</scope>
    <source>
        <tissue>Spleen</tissue>
        <tissue>Testis</tissue>
    </source>
</reference>
<dbReference type="EMBL" id="AY512923">
    <property type="protein sequence ID" value="AAR87794.1"/>
    <property type="molecule type" value="mRNA"/>
</dbReference>
<dbReference type="EMBL" id="AL671913">
    <property type="status" value="NOT_ANNOTATED_CDS"/>
    <property type="molecule type" value="Genomic_DNA"/>
</dbReference>
<dbReference type="EMBL" id="BX296536">
    <property type="status" value="NOT_ANNOTATED_CDS"/>
    <property type="molecule type" value="Genomic_DNA"/>
</dbReference>
<dbReference type="EMBL" id="BC051674">
    <property type="protein sequence ID" value="AAH51674.1"/>
    <property type="molecule type" value="mRNA"/>
</dbReference>
<dbReference type="EMBL" id="BC137910">
    <property type="protein sequence ID" value="AAI37911.1"/>
    <property type="status" value="ALT_INIT"/>
    <property type="molecule type" value="mRNA"/>
</dbReference>
<dbReference type="EMBL" id="BC145028">
    <property type="protein sequence ID" value="AAI45029.1"/>
    <property type="status" value="ALT_INIT"/>
    <property type="molecule type" value="mRNA"/>
</dbReference>
<dbReference type="CCDS" id="CCDS18006.2">
    <molecule id="B1AUR6-1"/>
</dbReference>
<dbReference type="RefSeq" id="NP_955761.2">
    <molecule id="B1AUR6-1"/>
    <property type="nucleotide sequence ID" value="NM_199467.3"/>
</dbReference>
<dbReference type="RefSeq" id="XP_036019831.1">
    <molecule id="B1AUR6-1"/>
    <property type="nucleotide sequence ID" value="XM_036163938.1"/>
</dbReference>
<dbReference type="BioGRID" id="229314">
    <property type="interactions" value="4"/>
</dbReference>
<dbReference type="FunCoup" id="B1AUR6">
    <property type="interactions" value="2730"/>
</dbReference>
<dbReference type="STRING" id="10090.ENSMUSP00000103857"/>
<dbReference type="iPTMnet" id="B1AUR6"/>
<dbReference type="PhosphoSitePlus" id="B1AUR6"/>
<dbReference type="PaxDb" id="10090-ENSMUSP00000103857"/>
<dbReference type="PeptideAtlas" id="B1AUR6"/>
<dbReference type="ProteomicsDB" id="295570">
    <molecule id="B1AUR6-1"/>
</dbReference>
<dbReference type="ProteomicsDB" id="295571">
    <molecule id="B1AUR6-2"/>
</dbReference>
<dbReference type="Pumba" id="B1AUR6"/>
<dbReference type="Antibodypedia" id="55212">
    <property type="antibodies" value="8 antibodies from 7 providers"/>
</dbReference>
<dbReference type="DNASU" id="212377"/>
<dbReference type="Ensembl" id="ENSMUST00000108222.9">
    <molecule id="B1AUR6-1"/>
    <property type="protein sequence ID" value="ENSMUSP00000103857.3"/>
    <property type="gene ID" value="ENSMUSG00000045751.17"/>
</dbReference>
<dbReference type="GeneID" id="212377"/>
<dbReference type="KEGG" id="mmu:212377"/>
<dbReference type="UCSC" id="uc008sdv.2">
    <molecule id="B1AUR6-1"/>
    <property type="organism name" value="mouse"/>
</dbReference>
<dbReference type="UCSC" id="uc008sdy.1">
    <molecule id="B1AUR6-2"/>
    <property type="organism name" value="mouse"/>
</dbReference>
<dbReference type="AGR" id="MGI:2684980"/>
<dbReference type="CTD" id="253714"/>
<dbReference type="MGI" id="MGI:2684980">
    <property type="gene designation" value="Mms22l"/>
</dbReference>
<dbReference type="VEuPathDB" id="HostDB:ENSMUSG00000045751"/>
<dbReference type="eggNOG" id="ENOG502QQCR">
    <property type="taxonomic scope" value="Eukaryota"/>
</dbReference>
<dbReference type="GeneTree" id="ENSGT00390000011769"/>
<dbReference type="InParanoid" id="B1AUR6"/>
<dbReference type="OMA" id="RVYLCLL"/>
<dbReference type="PhylomeDB" id="B1AUR6"/>
<dbReference type="TreeFam" id="TF353832"/>
<dbReference type="BioGRID-ORCS" id="212377">
    <property type="hits" value="35 hits in 119 CRISPR screens"/>
</dbReference>
<dbReference type="ChiTaRS" id="Mms22l">
    <property type="organism name" value="mouse"/>
</dbReference>
<dbReference type="PRO" id="PR:B1AUR6"/>
<dbReference type="Proteomes" id="UP000000589">
    <property type="component" value="Chromosome 4"/>
</dbReference>
<dbReference type="RNAct" id="B1AUR6">
    <property type="molecule type" value="protein"/>
</dbReference>
<dbReference type="Bgee" id="ENSMUSG00000045751">
    <property type="expression patterns" value="Expressed in ventricular zone and 146 other cell types or tissues"/>
</dbReference>
<dbReference type="ExpressionAtlas" id="B1AUR6">
    <property type="expression patterns" value="baseline and differential"/>
</dbReference>
<dbReference type="GO" id="GO:0005829">
    <property type="term" value="C:cytosol"/>
    <property type="evidence" value="ECO:0007669"/>
    <property type="project" value="Ensembl"/>
</dbReference>
<dbReference type="GO" id="GO:0035101">
    <property type="term" value="C:FACT complex"/>
    <property type="evidence" value="ECO:0007669"/>
    <property type="project" value="Ensembl"/>
</dbReference>
<dbReference type="GO" id="GO:0042555">
    <property type="term" value="C:MCM complex"/>
    <property type="evidence" value="ECO:0007669"/>
    <property type="project" value="Ensembl"/>
</dbReference>
<dbReference type="GO" id="GO:0043596">
    <property type="term" value="C:nuclear replication fork"/>
    <property type="evidence" value="ECO:0000250"/>
    <property type="project" value="UniProtKB"/>
</dbReference>
<dbReference type="GO" id="GO:0090734">
    <property type="term" value="C:site of DNA damage"/>
    <property type="evidence" value="ECO:0000250"/>
    <property type="project" value="UniProtKB"/>
</dbReference>
<dbReference type="GO" id="GO:0035861">
    <property type="term" value="C:site of double-strand break"/>
    <property type="evidence" value="ECO:0007669"/>
    <property type="project" value="Ensembl"/>
</dbReference>
<dbReference type="GO" id="GO:0003697">
    <property type="term" value="F:single-stranded DNA binding"/>
    <property type="evidence" value="ECO:0000250"/>
    <property type="project" value="UniProtKB"/>
</dbReference>
<dbReference type="GO" id="GO:0006325">
    <property type="term" value="P:chromatin organization"/>
    <property type="evidence" value="ECO:0007669"/>
    <property type="project" value="UniProtKB-KW"/>
</dbReference>
<dbReference type="GO" id="GO:0000724">
    <property type="term" value="P:double-strand break repair via homologous recombination"/>
    <property type="evidence" value="ECO:0000250"/>
    <property type="project" value="UniProtKB"/>
</dbReference>
<dbReference type="GO" id="GO:0071168">
    <property type="term" value="P:protein localization to chromatin"/>
    <property type="evidence" value="ECO:0007669"/>
    <property type="project" value="Ensembl"/>
</dbReference>
<dbReference type="GO" id="GO:0031297">
    <property type="term" value="P:replication fork processing"/>
    <property type="evidence" value="ECO:0000250"/>
    <property type="project" value="UniProtKB"/>
</dbReference>
<dbReference type="InterPro" id="IPR042320">
    <property type="entry name" value="MMS22-like"/>
</dbReference>
<dbReference type="InterPro" id="IPR029424">
    <property type="entry name" value="MMS22L_C"/>
</dbReference>
<dbReference type="InterPro" id="IPR029425">
    <property type="entry name" value="MMS22L_N"/>
</dbReference>
<dbReference type="PANTHER" id="PTHR28547">
    <property type="entry name" value="PROTEIN MMS22-LIKE"/>
    <property type="match status" value="1"/>
</dbReference>
<dbReference type="PANTHER" id="PTHR28547:SF1">
    <property type="entry name" value="PROTEIN MMS22-LIKE"/>
    <property type="match status" value="1"/>
</dbReference>
<dbReference type="Pfam" id="PF14911">
    <property type="entry name" value="MMS22L_C"/>
    <property type="match status" value="1"/>
</dbReference>
<dbReference type="Pfam" id="PF14910">
    <property type="entry name" value="MMS22L_N"/>
    <property type="match status" value="1"/>
</dbReference>
<protein>
    <recommendedName>
        <fullName>Protein MMS22-like</fullName>
    </recommendedName>
    <alternativeName>
        <fullName>Methyl methanesulfonate-sensitivity protein 22-like</fullName>
    </alternativeName>
</protein>
<comment type="function">
    <text evidence="1">Component of the MMS22L-TONSL complex, a complex that promotes homologous recombination-mediated repair of double-strand breaks (DSBs) at stalled or collapsed replication forks. The MMS22L-TONSL complex is required to maintain genome integrity during DNA replication. It mediates the assembly of RAD51 filaments on single-stranded DNA (ssDNA): the MMS22L-TONSL complex is recruited to DSBs following histone replacement by histone chaperones and eviction of the replication protein A complex (RPA/RP-A) from DSBs. Following recruitment to DSBs, the TONSL-MMS22L complex promotes recruitment of RAD51 filaments and subsequent homologous recombination. Within the complex, MMS22L acts by binding ssDNA.</text>
</comment>
<comment type="subunit">
    <text evidence="1">Component of the MMS22L-TONSL complex, a complex at least composed of MMS22L and TONSL/NFKBIL2. Interacts with RAD51; interaction is direct.</text>
</comment>
<comment type="subcellular location">
    <subcellularLocation>
        <location evidence="1">Nucleus</location>
    </subcellularLocation>
    <subcellularLocation>
        <location evidence="1">Chromosome</location>
    </subcellularLocation>
    <text evidence="1">Localizes to DNA damage sites, accumulates at stressed replication forks. Recruited to stalled or collapsed replication forks; directly binds replication protein A complex (RPA/RP-A)-coated single-stranded DNA (ssDNA).</text>
</comment>
<comment type="alternative products">
    <event type="alternative splicing"/>
    <isoform>
        <id>B1AUR6-1</id>
        <name>1</name>
        <sequence type="displayed"/>
    </isoform>
    <isoform>
        <id>B1AUR6-2</id>
        <name>2</name>
        <sequence type="described" ref="VSP_040445 VSP_040446"/>
    </isoform>
</comment>
<comment type="PTM">
    <text evidence="1">Degraded by the ubiquitin-proteasome system upon replication stress.</text>
</comment>
<comment type="similarity">
    <text evidence="3">Belongs to the MMS22 family. MMS22L subfamily.</text>
</comment>
<comment type="sequence caution" evidence="3">
    <conflict type="erroneous initiation">
        <sequence resource="EMBL-CDS" id="AAI37911"/>
    </conflict>
    <text>Truncated N-terminus.</text>
</comment>
<comment type="sequence caution" evidence="3">
    <conflict type="erroneous initiation">
        <sequence resource="EMBL-CDS" id="AAI45029"/>
    </conflict>
    <text>Truncated N-terminus.</text>
</comment>
<organism>
    <name type="scientific">Mus musculus</name>
    <name type="common">Mouse</name>
    <dbReference type="NCBI Taxonomy" id="10090"/>
    <lineage>
        <taxon>Eukaryota</taxon>
        <taxon>Metazoa</taxon>
        <taxon>Chordata</taxon>
        <taxon>Craniata</taxon>
        <taxon>Vertebrata</taxon>
        <taxon>Euteleostomi</taxon>
        <taxon>Mammalia</taxon>
        <taxon>Eutheria</taxon>
        <taxon>Euarchontoglires</taxon>
        <taxon>Glires</taxon>
        <taxon>Rodentia</taxon>
        <taxon>Myomorpha</taxon>
        <taxon>Muroidea</taxon>
        <taxon>Muridae</taxon>
        <taxon>Murinae</taxon>
        <taxon>Mus</taxon>
        <taxon>Mus</taxon>
    </lineage>
</organism>
<evidence type="ECO:0000250" key="1">
    <source>
        <dbReference type="UniProtKB" id="Q6ZRQ5"/>
    </source>
</evidence>
<evidence type="ECO:0000303" key="2">
    <source>
    </source>
</evidence>
<evidence type="ECO:0000305" key="3"/>
<sequence>MDGCSAASTFLTDSLELELGTEWCKPPCFSCAFDNREGKFSGESYLASGALKRLILNLDPLPTNFEEDTVELFGFQWVTETALVYSCRELFHLFRQQIFNLESLVQVSCDFGKIATLHAKADSIRQQCVVFLHYIKVFIFRCLKVQEAESHSRPAHPYEALEAQLPSMLVDELRGLLLYIGHLAALPSVTVGAFVNQNQMKLFPPSWHLLHLYLDTHWLVLEILHILGEKLKQVVYGRQFIGQAGDNLTNVSLFEEHCEHLFCDLICLSLNRFDKVMPSEALLISHCPCSCVKELWVLLIHLLDHRRKWSVADSFWNWLNKLLRTLFEKSSDQRRSSVSLTQAKDPLGFSWWISVHVASLYQIDRHGVSDKMKQMESNWSFIEELLKRSVTVQDSILEEQLRMHLHCCLTLCDFWEPNISVVTILWEYYSKNLNSSFSISWLPLKGLTNIIKSPLSMLTLVRNCCSDKQDPDLYKSSSSYIIFLCILAKVVKKAMRTSGPHPWKQVKGRIYSKFHQKRMEELTEVGLQNFFSLFLLLAAVAEIEDVASHVLDLLRFLRPASMSSHGALVWKGQMAFLLMYAQKNLDIGVWAEKLSCEFQEKAKEFLVSKNDEMVQRHALWTLLCIYIDGVQEVFETSSCLYPSHEHLLNDGFSMLLPACRESELRTVLNFLQAVLARIRSVHQQLCQELQRENVDLTVQSSLSAKERPLAAVAGALWRHFFSFLKSQRMTQVVPLSQLADAAADFTLLAVDMPNTAPPDLQPQPVISIIQLFGWDDIIWPQVVARYLSHLLQNSTVYEALSQSSCVSSQSLTIRSWVRCVLQMHIKHLSDPDLLIDVNPEQAVEKEYMEQLAEMTRLLFTLSEVKSVFSKAQIEQLPSPDDPKQALIQFLEAVGVTYRTLQTFSDKSAMVTKSLEYLGEVLKYIKPYLGKKVSSAGLQLTYGIMGILVKSWAHIFATSKAQKLLFRIIDCLLLPHTVLQQDKELPGPMLTAIQKTLPLYLQGICIVCCQSQNPNAYLNQLLRNVIEQYIGRFLPTSPCVSDLGQHPVLLALRNPASVPSMTPLRKHTVHAIRKSYLEFKGSSPPPRLASVLAFVLQLFKDTEMGACDLELLLPGILKCLVLVNEPQVKKLATENLQCMVQTCQVGSEGGPATQLTSLFRQFIQDYGMQYSYQVYSILETVATLNQHVVIQLIPTLTQSLKDSELKWGLGRNIAQREAYSRLLSGLGQVGQGEKQRLEK</sequence>
<accession>B1AUR6</accession>
<accession>B7ZN61</accession>
<accession>D3YXA0</accession>
<accession>Q6R5F9</accession>
<accession>Q80UT0</accession>
<name>MMS22_MOUSE</name>
<gene>
    <name type="primary">Mms22l</name>
</gene>
<keyword id="KW-0025">Alternative splicing</keyword>
<keyword id="KW-0156">Chromatin regulator</keyword>
<keyword id="KW-0158">Chromosome</keyword>
<keyword id="KW-0227">DNA damage</keyword>
<keyword id="KW-0234">DNA repair</keyword>
<keyword id="KW-0238">DNA-binding</keyword>
<keyword id="KW-0539">Nucleus</keyword>
<keyword id="KW-1185">Reference proteome</keyword>
<proteinExistence type="evidence at protein level"/>